<organism>
    <name type="scientific">Vibrio campbellii (strain ATCC BAA-1116)</name>
    <dbReference type="NCBI Taxonomy" id="2902295"/>
    <lineage>
        <taxon>Bacteria</taxon>
        <taxon>Pseudomonadati</taxon>
        <taxon>Pseudomonadota</taxon>
        <taxon>Gammaproteobacteria</taxon>
        <taxon>Vibrionales</taxon>
        <taxon>Vibrionaceae</taxon>
        <taxon>Vibrio</taxon>
    </lineage>
</organism>
<feature type="chain" id="PRO_1000016299" description="Glutamine--tRNA ligase">
    <location>
        <begin position="1"/>
        <end position="556"/>
    </location>
</feature>
<feature type="short sequence motif" description="'HIGH' region" evidence="1">
    <location>
        <begin position="34"/>
        <end position="44"/>
    </location>
</feature>
<feature type="short sequence motif" description="'KMSKS' region" evidence="1">
    <location>
        <begin position="268"/>
        <end position="272"/>
    </location>
</feature>
<feature type="binding site" evidence="1">
    <location>
        <begin position="35"/>
        <end position="37"/>
    </location>
    <ligand>
        <name>ATP</name>
        <dbReference type="ChEBI" id="CHEBI:30616"/>
    </ligand>
</feature>
<feature type="binding site" evidence="1">
    <location>
        <begin position="41"/>
        <end position="47"/>
    </location>
    <ligand>
        <name>ATP</name>
        <dbReference type="ChEBI" id="CHEBI:30616"/>
    </ligand>
</feature>
<feature type="binding site" evidence="1">
    <location>
        <position position="67"/>
    </location>
    <ligand>
        <name>L-glutamine</name>
        <dbReference type="ChEBI" id="CHEBI:58359"/>
    </ligand>
</feature>
<feature type="binding site" evidence="1">
    <location>
        <position position="212"/>
    </location>
    <ligand>
        <name>L-glutamine</name>
        <dbReference type="ChEBI" id="CHEBI:58359"/>
    </ligand>
</feature>
<feature type="binding site" evidence="1">
    <location>
        <position position="231"/>
    </location>
    <ligand>
        <name>ATP</name>
        <dbReference type="ChEBI" id="CHEBI:30616"/>
    </ligand>
</feature>
<feature type="binding site" evidence="1">
    <location>
        <begin position="261"/>
        <end position="262"/>
    </location>
    <ligand>
        <name>ATP</name>
        <dbReference type="ChEBI" id="CHEBI:30616"/>
    </ligand>
</feature>
<feature type="binding site" evidence="1">
    <location>
        <begin position="269"/>
        <end position="271"/>
    </location>
    <ligand>
        <name>ATP</name>
        <dbReference type="ChEBI" id="CHEBI:30616"/>
    </ligand>
</feature>
<evidence type="ECO:0000255" key="1">
    <source>
        <dbReference type="HAMAP-Rule" id="MF_00126"/>
    </source>
</evidence>
<protein>
    <recommendedName>
        <fullName evidence="1">Glutamine--tRNA ligase</fullName>
        <ecNumber evidence="1">6.1.1.18</ecNumber>
    </recommendedName>
    <alternativeName>
        <fullName evidence="1">Glutaminyl-tRNA synthetase</fullName>
        <shortName evidence="1">GlnRS</shortName>
    </alternativeName>
</protein>
<gene>
    <name evidence="1" type="primary">glnS</name>
    <name type="ordered locus">VIBHAR_01337</name>
</gene>
<sequence length="556" mass="63838">MSEADARPSNFIRQIIDKDLADGKHTSVHTRFPPEPNGYLHIGHAKSICLNFGIAQDYQGQCNLRFDDTNPEKEDIEYVESIKKDVNWLGFEWDGEVCYSSNYFDKLYEYAIELINKGLAYVDELSPEQIREYRGTLTAPGKPSPYRDRPIEENLALFEKMRAGEFEEGKACLRAKIDMGSSFMVMRDPVIYRVRFATHHQTGDKWCIYPMYDFTHCISDALEGITHSICTLEFMDNRRLYDWVLDNITIDCRPHQYEFSRLNLEYTVMSKRKLNQLVTEKLVDGWDDPRMPTVSGLRRRGFTSASIREFCKRIGVTKQENMIEFGSLESCIRDDLNENAPRAMAVLDPVKIVIENFEEGAVETLTVANHPNKPEMGEREVPFTREVWIEREDFREEANKKYKRLVLGKEVRLRGAYVIKAERIEKDAEGNITTIFCTYDAETLGKNPADGRKVKGVIHWVSADKALPAEIRLYDRLFTVPNPAAADDFAATINPESLVILNGFVEPSLAASEAEKGYQFERMGYFCADSKDSSADNLVFNRTVGLRDTWAKIENQ</sequence>
<proteinExistence type="inferred from homology"/>
<comment type="catalytic activity">
    <reaction evidence="1">
        <text>tRNA(Gln) + L-glutamine + ATP = L-glutaminyl-tRNA(Gln) + AMP + diphosphate</text>
        <dbReference type="Rhea" id="RHEA:20121"/>
        <dbReference type="Rhea" id="RHEA-COMP:9662"/>
        <dbReference type="Rhea" id="RHEA-COMP:9681"/>
        <dbReference type="ChEBI" id="CHEBI:30616"/>
        <dbReference type="ChEBI" id="CHEBI:33019"/>
        <dbReference type="ChEBI" id="CHEBI:58359"/>
        <dbReference type="ChEBI" id="CHEBI:78442"/>
        <dbReference type="ChEBI" id="CHEBI:78521"/>
        <dbReference type="ChEBI" id="CHEBI:456215"/>
        <dbReference type="EC" id="6.1.1.18"/>
    </reaction>
</comment>
<comment type="subunit">
    <text evidence="1">Monomer.</text>
</comment>
<comment type="subcellular location">
    <subcellularLocation>
        <location evidence="1">Cytoplasm</location>
    </subcellularLocation>
</comment>
<comment type="similarity">
    <text evidence="1">Belongs to the class-I aminoacyl-tRNA synthetase family.</text>
</comment>
<name>SYQ_VIBC1</name>
<accession>A7MT45</accession>
<dbReference type="EC" id="6.1.1.18" evidence="1"/>
<dbReference type="EMBL" id="CP000789">
    <property type="protein sequence ID" value="ABU70314.1"/>
    <property type="molecule type" value="Genomic_DNA"/>
</dbReference>
<dbReference type="RefSeq" id="WP_005535193.1">
    <property type="nucleotide sequence ID" value="NC_009783.1"/>
</dbReference>
<dbReference type="SMR" id="A7MT45"/>
<dbReference type="KEGG" id="vha:VIBHAR_01337"/>
<dbReference type="PATRIC" id="fig|338187.25.peg.1311"/>
<dbReference type="Proteomes" id="UP000008152">
    <property type="component" value="Chromosome I"/>
</dbReference>
<dbReference type="GO" id="GO:0005829">
    <property type="term" value="C:cytosol"/>
    <property type="evidence" value="ECO:0007669"/>
    <property type="project" value="TreeGrafter"/>
</dbReference>
<dbReference type="GO" id="GO:0005524">
    <property type="term" value="F:ATP binding"/>
    <property type="evidence" value="ECO:0007669"/>
    <property type="project" value="UniProtKB-UniRule"/>
</dbReference>
<dbReference type="GO" id="GO:0004819">
    <property type="term" value="F:glutamine-tRNA ligase activity"/>
    <property type="evidence" value="ECO:0007669"/>
    <property type="project" value="UniProtKB-UniRule"/>
</dbReference>
<dbReference type="GO" id="GO:0006425">
    <property type="term" value="P:glutaminyl-tRNA aminoacylation"/>
    <property type="evidence" value="ECO:0007669"/>
    <property type="project" value="InterPro"/>
</dbReference>
<dbReference type="GO" id="GO:0006424">
    <property type="term" value="P:glutamyl-tRNA aminoacylation"/>
    <property type="evidence" value="ECO:0007669"/>
    <property type="project" value="UniProtKB-UniRule"/>
</dbReference>
<dbReference type="CDD" id="cd00807">
    <property type="entry name" value="GlnRS_core"/>
    <property type="match status" value="1"/>
</dbReference>
<dbReference type="FunFam" id="1.10.1160.10:FF:000001">
    <property type="entry name" value="Glutamine--tRNA ligase"/>
    <property type="match status" value="1"/>
</dbReference>
<dbReference type="FunFam" id="2.40.240.10:FF:000001">
    <property type="entry name" value="Glutamine--tRNA ligase"/>
    <property type="match status" value="1"/>
</dbReference>
<dbReference type="FunFam" id="2.40.240.10:FF:000003">
    <property type="entry name" value="Glutamine--tRNA ligase"/>
    <property type="match status" value="1"/>
</dbReference>
<dbReference type="FunFam" id="3.90.800.10:FF:000001">
    <property type="entry name" value="Glutamine--tRNA ligase"/>
    <property type="match status" value="1"/>
</dbReference>
<dbReference type="FunFam" id="3.40.50.620:FF:000037">
    <property type="entry name" value="Glutamine--tRNA ligase cytoplasmic"/>
    <property type="match status" value="1"/>
</dbReference>
<dbReference type="Gene3D" id="1.10.1160.10">
    <property type="entry name" value="Glutamyl-trna Synthetase, Domain 2"/>
    <property type="match status" value="1"/>
</dbReference>
<dbReference type="Gene3D" id="3.90.800.10">
    <property type="entry name" value="Glutamyl-tRNA Synthetase, Domain 3"/>
    <property type="match status" value="1"/>
</dbReference>
<dbReference type="Gene3D" id="3.40.50.620">
    <property type="entry name" value="HUPs"/>
    <property type="match status" value="1"/>
</dbReference>
<dbReference type="Gene3D" id="2.40.240.10">
    <property type="entry name" value="Ribosomal Protein L25, Chain P"/>
    <property type="match status" value="2"/>
</dbReference>
<dbReference type="HAMAP" id="MF_00126">
    <property type="entry name" value="Gln_tRNA_synth"/>
    <property type="match status" value="1"/>
</dbReference>
<dbReference type="InterPro" id="IPR001412">
    <property type="entry name" value="aa-tRNA-synth_I_CS"/>
</dbReference>
<dbReference type="InterPro" id="IPR004514">
    <property type="entry name" value="Gln-tRNA-synth"/>
</dbReference>
<dbReference type="InterPro" id="IPR050132">
    <property type="entry name" value="Gln/Glu-tRNA_Ligase"/>
</dbReference>
<dbReference type="InterPro" id="IPR022861">
    <property type="entry name" value="Gln_tRNA_ligase_bac"/>
</dbReference>
<dbReference type="InterPro" id="IPR000924">
    <property type="entry name" value="Glu/Gln-tRNA-synth"/>
</dbReference>
<dbReference type="InterPro" id="IPR020058">
    <property type="entry name" value="Glu/Gln-tRNA-synth_Ib_cat-dom"/>
</dbReference>
<dbReference type="InterPro" id="IPR020059">
    <property type="entry name" value="Glu/Gln-tRNA-synth_Ib_codon-bd"/>
</dbReference>
<dbReference type="InterPro" id="IPR020061">
    <property type="entry name" value="Glu_tRNA_lig_a-bdl"/>
</dbReference>
<dbReference type="InterPro" id="IPR020056">
    <property type="entry name" value="Rbsml_bL25/Gln-tRNA_synth_N"/>
</dbReference>
<dbReference type="InterPro" id="IPR011035">
    <property type="entry name" value="Ribosomal_bL25/Gln-tRNA_synth"/>
</dbReference>
<dbReference type="InterPro" id="IPR014729">
    <property type="entry name" value="Rossmann-like_a/b/a_fold"/>
</dbReference>
<dbReference type="InterPro" id="IPR049437">
    <property type="entry name" value="tRNA-synt_1c_C2"/>
</dbReference>
<dbReference type="NCBIfam" id="TIGR00440">
    <property type="entry name" value="glnS"/>
    <property type="match status" value="1"/>
</dbReference>
<dbReference type="NCBIfam" id="NF011291">
    <property type="entry name" value="PRK14703.1"/>
    <property type="match status" value="1"/>
</dbReference>
<dbReference type="PANTHER" id="PTHR43097:SF5">
    <property type="entry name" value="GLUTAMATE--TRNA LIGASE"/>
    <property type="match status" value="1"/>
</dbReference>
<dbReference type="PANTHER" id="PTHR43097">
    <property type="entry name" value="GLUTAMINE-TRNA LIGASE"/>
    <property type="match status" value="1"/>
</dbReference>
<dbReference type="Pfam" id="PF00749">
    <property type="entry name" value="tRNA-synt_1c"/>
    <property type="match status" value="1"/>
</dbReference>
<dbReference type="Pfam" id="PF03950">
    <property type="entry name" value="tRNA-synt_1c_C"/>
    <property type="match status" value="1"/>
</dbReference>
<dbReference type="Pfam" id="PF20974">
    <property type="entry name" value="tRNA-synt_1c_C2"/>
    <property type="match status" value="1"/>
</dbReference>
<dbReference type="PRINTS" id="PR00987">
    <property type="entry name" value="TRNASYNTHGLU"/>
</dbReference>
<dbReference type="SUPFAM" id="SSF52374">
    <property type="entry name" value="Nucleotidylyl transferase"/>
    <property type="match status" value="1"/>
</dbReference>
<dbReference type="SUPFAM" id="SSF50715">
    <property type="entry name" value="Ribosomal protein L25-like"/>
    <property type="match status" value="1"/>
</dbReference>
<dbReference type="PROSITE" id="PS00178">
    <property type="entry name" value="AA_TRNA_LIGASE_I"/>
    <property type="match status" value="1"/>
</dbReference>
<reference key="1">
    <citation type="submission" date="2007-08" db="EMBL/GenBank/DDBJ databases">
        <authorList>
            <consortium name="The Vibrio harveyi Genome Sequencing Project"/>
            <person name="Bassler B."/>
            <person name="Clifton S.W."/>
            <person name="Fulton L."/>
            <person name="Delehaunty K."/>
            <person name="Fronick C."/>
            <person name="Harrison M."/>
            <person name="Markivic C."/>
            <person name="Fulton R."/>
            <person name="Tin-Wollam A.-M."/>
            <person name="Shah N."/>
            <person name="Pepin K."/>
            <person name="Nash W."/>
            <person name="Thiruvilangam P."/>
            <person name="Bhonagiri V."/>
            <person name="Waters C."/>
            <person name="Tu K.C."/>
            <person name="Irgon J."/>
            <person name="Wilson R.K."/>
        </authorList>
    </citation>
    <scope>NUCLEOTIDE SEQUENCE [LARGE SCALE GENOMIC DNA]</scope>
    <source>
        <strain>ATCC BAA-1116 / BB120</strain>
    </source>
</reference>
<keyword id="KW-0030">Aminoacyl-tRNA synthetase</keyword>
<keyword id="KW-0067">ATP-binding</keyword>
<keyword id="KW-0963">Cytoplasm</keyword>
<keyword id="KW-0436">Ligase</keyword>
<keyword id="KW-0547">Nucleotide-binding</keyword>
<keyword id="KW-0648">Protein biosynthesis</keyword>